<organism>
    <name type="scientific">Homo sapiens</name>
    <name type="common">Human</name>
    <dbReference type="NCBI Taxonomy" id="9606"/>
    <lineage>
        <taxon>Eukaryota</taxon>
        <taxon>Metazoa</taxon>
        <taxon>Chordata</taxon>
        <taxon>Craniata</taxon>
        <taxon>Vertebrata</taxon>
        <taxon>Euteleostomi</taxon>
        <taxon>Mammalia</taxon>
        <taxon>Eutheria</taxon>
        <taxon>Euarchontoglires</taxon>
        <taxon>Primates</taxon>
        <taxon>Haplorrhini</taxon>
        <taxon>Catarrhini</taxon>
        <taxon>Hominidae</taxon>
        <taxon>Homo</taxon>
    </lineage>
</organism>
<proteinExistence type="evidence at protein level"/>
<sequence>MDPVGLQLGNKNLWSCLVRLLTKDPEWLNAKMKFFLPNTDLDSRNETLDPEQRVILQLNKLHVQGSDTWQSFIHCVCMQLEVPLDLEVLLLSTFGYDDGFTSQLGAEGKSQPESQLHHGLKRPHQSCGSSPRRKQCKKQQLELAKKYLQLLRTSAQQRYRSQIPGSGQPHAFHQVYVPPILRRATASLDTPEGAIMGDVKVEDGADVSISDLFNTRVNKGPRVTVLLGKAGMGKTTLAHRLCQKWAEGHLNCFQALFLFEFRQLNLITRFLTPSELLFDLYLSPESDHDTVFQYLEKNADQVLLIFDGLDEALQPMGPDGPGPVLTLFSHLCNGTLLPGCRVMATSRPGKLPACLPAEAAMVHMLGFDGPRVEEYVNHFFSAQPSREGALVELQTNGRLRSLCAVPALCQVACLCLHHLLPDHAPGQSVALLPNMTQLYMQMVLALSPPGHLPTSSLLDLGEVALRGLETGKVIFYAKDIAPPLIAFGATHSLLTSFCVCTGPGHQQTGYAFTHLSLQEFLAALHLMASPKVNKDTLTQYVTLHSRWVQRTKARLGLSDHLPTFLAGLASCTCRPFLSHLAQGNEDCVGAKQAAVVQVLKKLATRKLTGPKVVELCHCVDETQEPELASLTAQSLPYQLPFHNFPLTCTDLATLTNILEHREAPIHLDFDGCPLEPHCPEALVGCGQIENLSFKSRKCGDAFAEALSRSLPTMGRLQMLGLAGSKITARGISHLVKALPLCPQLKEVSFRDNQLSDQVVLNIVEVLPHLPRLRKLDLSSNSICVSTLLCLARVAVTCPTVRMLQAREADLIFLLSPPTETTAELQRAPDLQESDGQRKGAQSRSLTLRLQKCQLQVHDAEALIALLQEGPHLEEVDLSGNQLEDEGCRLMAEAASQLHIARKLDLSNNGLSVAGVHCVLRAVSACWTLAELHISLQHKTVIFMFAQEPEEQKGPQERAAFLDSLMLQMPSELPLSSRRMRLTHCGLQEKHLEQLCKALGGSCHLGHLHLDFSGNALGDEGAARLAQLLPGLGALQSLNLSENGLSLDAVLGLVRCFSTLQWLFRLDISFESQHILLRGDKTSRDMWATGSLPDFPAAAKFLGFRQRCIPRSLCLSECPLEPPSLTRLCATLKDCPGPLELQLSCEFLSDQSLETLLDCLPQLPQLSLLQLSQTGLSPKSPFLLANTLSLCPRVKKVDLRSLHHATLHFRSNEEEEGVCCGRFTGCSLSQEHVESLCWLLSKCKDLSQVDLSANLLGDSGLRCLLECLPQVPISGLLDLSHNSISQESALYLLETLPSCPRVREASVNLGSEQSFRIHFSREDQAGKTLRLSECSFRPEHVSRLATGLSKSLQLTELTLTQCCLGQKQLAILLSLVGRPAGLFSLRVQEPWADRARVLSLLEVCAQASGSVTEISISETQQQLCVQLEFPRQEENPEAVALRLAHCDLGAHHSLLVGQLMETCARLQQLSLSQVNLCEDDDASSLLLQSLLLSLSELKTFRLTSSCVSTEGLAHLASGLGHCHHLEELDLSNNQFDEEGTKALMRALEGKWMLKRLDLSHLLLNSSTLALLTHRLSQMTCLQSLRLNRNSIGDVGCCHLSEALRAATSLEELDLSHNQIGDAGVQHLATILPGLPELRKIDLSGNSISSAGGVQLAESLVLCRRLEELMLGCNALGDPTALGLAQELPQHLRVLHLPFSHLGPGGALSLAQALDGSPHLEEISLAENNLAGGVLRFCMELPLLRQIDLVSCKIDNQTAKLLTSSFTSCPALEVILLSWNLLGDEAAAELAQVLPQMGRLKRVDLEKNQITALGAWLLAEGLAQGSSIQVIRLWNNPIPCDMAQHLKSQEPRLDFAFFDNQPQAPWGT</sequence>
<gene>
    <name type="primary">NLRC5</name>
    <name type="synonym">NOD27</name>
    <name type="synonym">NOD4</name>
</gene>
<dbReference type="EMBL" id="AF389420">
    <property type="protein sequence ID" value="AAO59377.1"/>
    <property type="molecule type" value="mRNA"/>
</dbReference>
<dbReference type="EMBL" id="EF452236">
    <property type="protein sequence ID" value="ABO40479.1"/>
    <property type="molecule type" value="mRNA"/>
</dbReference>
<dbReference type="EMBL" id="AK074133">
    <property type="protein sequence ID" value="BAB84959.1"/>
    <property type="molecule type" value="mRNA"/>
</dbReference>
<dbReference type="EMBL" id="AK074182">
    <property type="protein sequence ID" value="BAB85008.1"/>
    <property type="status" value="ALT_INIT"/>
    <property type="molecule type" value="mRNA"/>
</dbReference>
<dbReference type="EMBL" id="AC009090">
    <property type="status" value="NOT_ANNOTATED_CDS"/>
    <property type="molecule type" value="Genomic_DNA"/>
</dbReference>
<dbReference type="EMBL" id="AC023825">
    <property type="status" value="NOT_ANNOTATED_CDS"/>
    <property type="molecule type" value="Genomic_DNA"/>
</dbReference>
<dbReference type="EMBL" id="AK090439">
    <property type="protein sequence ID" value="BAC03420.1"/>
    <property type="molecule type" value="mRNA"/>
</dbReference>
<dbReference type="EMBL" id="BC050527">
    <property type="protein sequence ID" value="AAH50527.1"/>
    <property type="molecule type" value="mRNA"/>
</dbReference>
<dbReference type="EMBL" id="BC063566">
    <property type="protein sequence ID" value="AAH63566.1"/>
    <property type="molecule type" value="mRNA"/>
</dbReference>
<dbReference type="EMBL" id="AK027414">
    <property type="protein sequence ID" value="BAB55096.1"/>
    <property type="status" value="ALT_INIT"/>
    <property type="molecule type" value="mRNA"/>
</dbReference>
<dbReference type="EMBL" id="AK027416">
    <property type="protein sequence ID" value="BAB55098.1"/>
    <property type="status" value="ALT_INIT"/>
    <property type="molecule type" value="mRNA"/>
</dbReference>
<dbReference type="CCDS" id="CCDS10773.1">
    <molecule id="Q86WI3-1"/>
</dbReference>
<dbReference type="CCDS" id="CCDS81985.1">
    <molecule id="Q86WI3-4"/>
</dbReference>
<dbReference type="RefSeq" id="NP_001317481.1">
    <molecule id="Q86WI3-4"/>
    <property type="nucleotide sequence ID" value="NM_001330552.2"/>
</dbReference>
<dbReference type="RefSeq" id="NP_001371879.1">
    <molecule id="Q86WI3-1"/>
    <property type="nucleotide sequence ID" value="NM_001384950.1"/>
</dbReference>
<dbReference type="RefSeq" id="NP_001371880.1">
    <molecule id="Q86WI3-4"/>
    <property type="nucleotide sequence ID" value="NM_001384951.1"/>
</dbReference>
<dbReference type="RefSeq" id="NP_001371900.1">
    <molecule id="Q86WI3-5"/>
    <property type="nucleotide sequence ID" value="NM_001384971.1"/>
</dbReference>
<dbReference type="RefSeq" id="NP_115582.4">
    <molecule id="Q86WI3-1"/>
    <property type="nucleotide sequence ID" value="NM_032206.4"/>
</dbReference>
<dbReference type="RefSeq" id="XP_005256250.1">
    <property type="nucleotide sequence ID" value="XM_005256193.2"/>
</dbReference>
<dbReference type="RefSeq" id="XP_005256251.1">
    <property type="nucleotide sequence ID" value="XM_005256194.3"/>
</dbReference>
<dbReference type="RefSeq" id="XP_005256254.1">
    <property type="nucleotide sequence ID" value="XM_005256197.2"/>
</dbReference>
<dbReference type="RefSeq" id="XP_006721360.1">
    <property type="nucleotide sequence ID" value="XM_006721297.2"/>
</dbReference>
<dbReference type="RefSeq" id="XP_011521675.1">
    <property type="nucleotide sequence ID" value="XM_011523373.2"/>
</dbReference>
<dbReference type="BioGRID" id="123922">
    <property type="interactions" value="26"/>
</dbReference>
<dbReference type="FunCoup" id="Q86WI3">
    <property type="interactions" value="1001"/>
</dbReference>
<dbReference type="IntAct" id="Q86WI3">
    <property type="interactions" value="7"/>
</dbReference>
<dbReference type="MINT" id="Q86WI3"/>
<dbReference type="STRING" id="9606.ENSP00000262510"/>
<dbReference type="GlyGen" id="Q86WI3">
    <property type="glycosylation" value="1 site, 1 O-linked glycan (1 site)"/>
</dbReference>
<dbReference type="iPTMnet" id="Q86WI3"/>
<dbReference type="PhosphoSitePlus" id="Q86WI3"/>
<dbReference type="BioMuta" id="NLRC5"/>
<dbReference type="DMDM" id="269849666"/>
<dbReference type="jPOST" id="Q86WI3"/>
<dbReference type="MassIVE" id="Q86WI3"/>
<dbReference type="PaxDb" id="9606-ENSP00000262510"/>
<dbReference type="PeptideAtlas" id="Q86WI3"/>
<dbReference type="ProteomicsDB" id="70166">
    <molecule id="Q86WI3-1"/>
</dbReference>
<dbReference type="ProteomicsDB" id="70167">
    <molecule id="Q86WI3-2"/>
</dbReference>
<dbReference type="ProteomicsDB" id="70168">
    <molecule id="Q86WI3-3"/>
</dbReference>
<dbReference type="ProteomicsDB" id="70169">
    <molecule id="Q86WI3-4"/>
</dbReference>
<dbReference type="ProteomicsDB" id="70170">
    <molecule id="Q86WI3-5"/>
</dbReference>
<dbReference type="ProteomicsDB" id="70171">
    <molecule id="Q86WI3-6"/>
</dbReference>
<dbReference type="Antibodypedia" id="44042">
    <property type="antibodies" value="86 antibodies from 27 providers"/>
</dbReference>
<dbReference type="DNASU" id="84166"/>
<dbReference type="Ensembl" id="ENST00000262510.10">
    <molecule id="Q86WI3-1"/>
    <property type="protein sequence ID" value="ENSP00000262510.6"/>
    <property type="gene ID" value="ENSG00000140853.17"/>
</dbReference>
<dbReference type="Ensembl" id="ENST00000539144.5">
    <molecule id="Q86WI3-4"/>
    <property type="protein sequence ID" value="ENSP00000441727.1"/>
    <property type="gene ID" value="ENSG00000140853.17"/>
</dbReference>
<dbReference type="Ensembl" id="ENST00000539881.5">
    <molecule id="Q86WI3-3"/>
    <property type="protein sequence ID" value="ENSP00000441679.1"/>
    <property type="gene ID" value="ENSG00000140853.17"/>
</dbReference>
<dbReference type="Ensembl" id="ENST00000688547.1">
    <molecule id="Q86WI3-1"/>
    <property type="protein sequence ID" value="ENSP00000509992.1"/>
    <property type="gene ID" value="ENSG00000140853.17"/>
</dbReference>
<dbReference type="GeneID" id="84166"/>
<dbReference type="KEGG" id="hsa:84166"/>
<dbReference type="MANE-Select" id="ENST00000688547.1">
    <property type="protein sequence ID" value="ENSP00000509992.1"/>
    <property type="RefSeq nucleotide sequence ID" value="NM_001384950.1"/>
    <property type="RefSeq protein sequence ID" value="NP_001371879.1"/>
</dbReference>
<dbReference type="UCSC" id="uc010ccq.2">
    <molecule id="Q86WI3-1"/>
    <property type="organism name" value="human"/>
</dbReference>
<dbReference type="AGR" id="HGNC:29933"/>
<dbReference type="CTD" id="84166"/>
<dbReference type="DisGeNET" id="84166"/>
<dbReference type="GeneCards" id="NLRC5"/>
<dbReference type="HGNC" id="HGNC:29933">
    <property type="gene designation" value="NLRC5"/>
</dbReference>
<dbReference type="HPA" id="ENSG00000140853">
    <property type="expression patterns" value="Tissue enhanced (bone marrow, lymphoid tissue)"/>
</dbReference>
<dbReference type="MIM" id="613537">
    <property type="type" value="gene"/>
</dbReference>
<dbReference type="neXtProt" id="NX_Q86WI3"/>
<dbReference type="OpenTargets" id="ENSG00000140853"/>
<dbReference type="PharmGKB" id="PA162397694"/>
<dbReference type="VEuPathDB" id="HostDB:ENSG00000140853"/>
<dbReference type="eggNOG" id="KOG4308">
    <property type="taxonomic scope" value="Eukaryota"/>
</dbReference>
<dbReference type="GeneTree" id="ENSGT00940000160652"/>
<dbReference type="HOGENOM" id="CLU_383986_0_0_1"/>
<dbReference type="InParanoid" id="Q86WI3"/>
<dbReference type="OMA" id="AQQDETW"/>
<dbReference type="OrthoDB" id="120976at2759"/>
<dbReference type="PAN-GO" id="Q86WI3">
    <property type="GO annotations" value="5 GO annotations based on evolutionary models"/>
</dbReference>
<dbReference type="PhylomeDB" id="Q86WI3"/>
<dbReference type="PathwayCommons" id="Q86WI3"/>
<dbReference type="Reactome" id="R-HSA-168928">
    <property type="pathway name" value="DDX58/IFIH1-mediated induction of interferon-alpha/beta"/>
</dbReference>
<dbReference type="Reactome" id="R-HSA-936440">
    <property type="pathway name" value="Negative regulators of DDX58/IFIH1 signaling"/>
</dbReference>
<dbReference type="Reactome" id="R-HSA-9758274">
    <property type="pathway name" value="Regulation of NF-kappa B signaling"/>
</dbReference>
<dbReference type="SignaLink" id="Q86WI3"/>
<dbReference type="BioGRID-ORCS" id="84166">
    <property type="hits" value="13 hits in 1149 CRISPR screens"/>
</dbReference>
<dbReference type="ChiTaRS" id="NLRC5">
    <property type="organism name" value="human"/>
</dbReference>
<dbReference type="GeneWiki" id="NLRC5"/>
<dbReference type="GenomeRNAi" id="84166"/>
<dbReference type="Pharos" id="Q86WI3">
    <property type="development level" value="Tbio"/>
</dbReference>
<dbReference type="PRO" id="PR:Q86WI3"/>
<dbReference type="Proteomes" id="UP000005640">
    <property type="component" value="Chromosome 16"/>
</dbReference>
<dbReference type="RNAct" id="Q86WI3">
    <property type="molecule type" value="protein"/>
</dbReference>
<dbReference type="Bgee" id="ENSG00000140853">
    <property type="expression patterns" value="Expressed in granulocyte and 149 other cell types or tissues"/>
</dbReference>
<dbReference type="ExpressionAtlas" id="Q86WI3">
    <property type="expression patterns" value="baseline and differential"/>
</dbReference>
<dbReference type="GO" id="GO:0005813">
    <property type="term" value="C:centrosome"/>
    <property type="evidence" value="ECO:0000314"/>
    <property type="project" value="HPA"/>
</dbReference>
<dbReference type="GO" id="GO:0005737">
    <property type="term" value="C:cytoplasm"/>
    <property type="evidence" value="ECO:0000314"/>
    <property type="project" value="UniProtKB"/>
</dbReference>
<dbReference type="GO" id="GO:0005829">
    <property type="term" value="C:cytosol"/>
    <property type="evidence" value="ECO:0000314"/>
    <property type="project" value="BHF-UCL"/>
</dbReference>
<dbReference type="GO" id="GO:0005634">
    <property type="term" value="C:nucleus"/>
    <property type="evidence" value="ECO:0000314"/>
    <property type="project" value="BHF-UCL"/>
</dbReference>
<dbReference type="GO" id="GO:0005524">
    <property type="term" value="F:ATP binding"/>
    <property type="evidence" value="ECO:0007669"/>
    <property type="project" value="UniProtKB-KW"/>
</dbReference>
<dbReference type="GO" id="GO:0000978">
    <property type="term" value="F:RNA polymerase II cis-regulatory region sequence-specific DNA binding"/>
    <property type="evidence" value="ECO:0000314"/>
    <property type="project" value="BHF-UCL"/>
</dbReference>
<dbReference type="GO" id="GO:0051607">
    <property type="term" value="P:defense response to virus"/>
    <property type="evidence" value="ECO:0000270"/>
    <property type="project" value="UniProtKB"/>
</dbReference>
<dbReference type="GO" id="GO:0045087">
    <property type="term" value="P:innate immune response"/>
    <property type="evidence" value="ECO:0000315"/>
    <property type="project" value="UniProtKB"/>
</dbReference>
<dbReference type="GO" id="GO:0032088">
    <property type="term" value="P:negative regulation of NF-kappaB transcription factor activity"/>
    <property type="evidence" value="ECO:0000314"/>
    <property type="project" value="UniProtKB"/>
</dbReference>
<dbReference type="GO" id="GO:0060339">
    <property type="term" value="P:negative regulation of type I interferon-mediated signaling pathway"/>
    <property type="evidence" value="ECO:0000314"/>
    <property type="project" value="UniProtKB"/>
</dbReference>
<dbReference type="GO" id="GO:0045345">
    <property type="term" value="P:positive regulation of MHC class I biosynthetic process"/>
    <property type="evidence" value="ECO:0000314"/>
    <property type="project" value="BHF-UCL"/>
</dbReference>
<dbReference type="GO" id="GO:0045944">
    <property type="term" value="P:positive regulation of transcription by RNA polymerase II"/>
    <property type="evidence" value="ECO:0000314"/>
    <property type="project" value="BHF-UCL"/>
</dbReference>
<dbReference type="GO" id="GO:0060340">
    <property type="term" value="P:positive regulation of type I interferon-mediated signaling pathway"/>
    <property type="evidence" value="ECO:0000314"/>
    <property type="project" value="UniProtKB"/>
</dbReference>
<dbReference type="GO" id="GO:0060335">
    <property type="term" value="P:positive regulation of type II interferon-mediated signaling pathway"/>
    <property type="evidence" value="ECO:0000314"/>
    <property type="project" value="UniProtKB"/>
</dbReference>
<dbReference type="GO" id="GO:0043549">
    <property type="term" value="P:regulation of kinase activity"/>
    <property type="evidence" value="ECO:0000314"/>
    <property type="project" value="UniProtKB"/>
</dbReference>
<dbReference type="GO" id="GO:0009617">
    <property type="term" value="P:response to bacterium"/>
    <property type="evidence" value="ECO:0007669"/>
    <property type="project" value="Ensembl"/>
</dbReference>
<dbReference type="FunFam" id="1.10.533.20:FF:000001">
    <property type="entry name" value="NLR family CARD domain containing 5"/>
    <property type="match status" value="1"/>
</dbReference>
<dbReference type="FunFam" id="3.40.50.300:FF:001114">
    <property type="entry name" value="NLR family CARD domain containing 5"/>
    <property type="match status" value="1"/>
</dbReference>
<dbReference type="FunFam" id="3.80.10.10:FF:000255">
    <property type="entry name" value="NLR family CARD domain containing 5"/>
    <property type="match status" value="1"/>
</dbReference>
<dbReference type="FunFam" id="3.80.10.10:FF:000264">
    <property type="entry name" value="NLR family CARD domain containing 5"/>
    <property type="match status" value="1"/>
</dbReference>
<dbReference type="FunFam" id="3.80.10.10:FF:000267">
    <property type="entry name" value="NLR family CARD domain containing 5"/>
    <property type="match status" value="1"/>
</dbReference>
<dbReference type="FunFam" id="3.80.10.10:FF:000508">
    <property type="entry name" value="NLR family CARD domain containing 5"/>
    <property type="match status" value="1"/>
</dbReference>
<dbReference type="FunFam" id="3.80.10.10:FF:000818">
    <property type="entry name" value="NLR family CARD domain containing 5"/>
    <property type="match status" value="1"/>
</dbReference>
<dbReference type="Gene3D" id="1.10.533.20">
    <property type="match status" value="1"/>
</dbReference>
<dbReference type="Gene3D" id="3.40.50.300">
    <property type="entry name" value="P-loop containing nucleotide triphosphate hydrolases"/>
    <property type="match status" value="1"/>
</dbReference>
<dbReference type="Gene3D" id="3.80.10.10">
    <property type="entry name" value="Ribonuclease Inhibitor"/>
    <property type="match status" value="6"/>
</dbReference>
<dbReference type="InterPro" id="IPR001611">
    <property type="entry name" value="Leu-rich_rpt"/>
</dbReference>
<dbReference type="InterPro" id="IPR006553">
    <property type="entry name" value="Leu-rich_rpt_Cys-con_subtyp"/>
</dbReference>
<dbReference type="InterPro" id="IPR032675">
    <property type="entry name" value="LRR_dom_sf"/>
</dbReference>
<dbReference type="InterPro" id="IPR007111">
    <property type="entry name" value="NACHT_NTPase"/>
</dbReference>
<dbReference type="InterPro" id="IPR041210">
    <property type="entry name" value="NLRC5_atypical_Card"/>
</dbReference>
<dbReference type="InterPro" id="IPR041267">
    <property type="entry name" value="NLRP_HD2"/>
</dbReference>
<dbReference type="InterPro" id="IPR027417">
    <property type="entry name" value="P-loop_NTPase"/>
</dbReference>
<dbReference type="PANTHER" id="PTHR47189">
    <property type="entry name" value="MHC CLASS II TRANSACTIVATOR"/>
    <property type="match status" value="1"/>
</dbReference>
<dbReference type="PANTHER" id="PTHR47189:SF1">
    <property type="entry name" value="MHC CLASS II TRANSACTIVATOR"/>
    <property type="match status" value="1"/>
</dbReference>
<dbReference type="Pfam" id="PF18461">
    <property type="entry name" value="Atypical_Card"/>
    <property type="match status" value="1"/>
</dbReference>
<dbReference type="Pfam" id="PF13516">
    <property type="entry name" value="LRR_6"/>
    <property type="match status" value="5"/>
</dbReference>
<dbReference type="Pfam" id="PF05729">
    <property type="entry name" value="NACHT"/>
    <property type="match status" value="1"/>
</dbReference>
<dbReference type="Pfam" id="PF17776">
    <property type="entry name" value="NLRC4_HD2"/>
    <property type="match status" value="1"/>
</dbReference>
<dbReference type="SMART" id="SM00367">
    <property type="entry name" value="LRR_CC"/>
    <property type="match status" value="9"/>
</dbReference>
<dbReference type="SMART" id="SM00368">
    <property type="entry name" value="LRR_RI"/>
    <property type="match status" value="19"/>
</dbReference>
<dbReference type="SUPFAM" id="SSF52540">
    <property type="entry name" value="P-loop containing nucleoside triphosphate hydrolases"/>
    <property type="match status" value="1"/>
</dbReference>
<dbReference type="SUPFAM" id="SSF52047">
    <property type="entry name" value="RNI-like"/>
    <property type="match status" value="4"/>
</dbReference>
<dbReference type="PROSITE" id="PS51450">
    <property type="entry name" value="LRR"/>
    <property type="match status" value="13"/>
</dbReference>
<dbReference type="PROSITE" id="PS50837">
    <property type="entry name" value="NACHT"/>
    <property type="match status" value="1"/>
</dbReference>
<protein>
    <recommendedName>
        <fullName>Protein NLRC5</fullName>
    </recommendedName>
    <alternativeName>
        <fullName>Caterpiller protein 16.1</fullName>
        <shortName>CLR16.1</shortName>
    </alternativeName>
    <alternativeName>
        <fullName>Nucleotide-binding oligomerization domain protein 27</fullName>
    </alternativeName>
    <alternativeName>
        <fullName>Nucleotide-binding oligomerization domain protein 4</fullName>
    </alternativeName>
</protein>
<feature type="chain" id="PRO_0000296189" description="Protein NLRC5">
    <location>
        <begin position="1"/>
        <end position="1866"/>
    </location>
</feature>
<feature type="domain" description="NACHT" evidence="1">
    <location>
        <begin position="222"/>
        <end position="539"/>
    </location>
</feature>
<feature type="repeat" description="LRR 1">
    <location>
        <begin position="599"/>
        <end position="622"/>
    </location>
</feature>
<feature type="repeat" description="LRR 2">
    <location>
        <begin position="713"/>
        <end position="737"/>
    </location>
</feature>
<feature type="repeat" description="LRR 3">
    <location>
        <begin position="741"/>
        <end position="765"/>
    </location>
</feature>
<feature type="repeat" description="LRR 4">
    <location>
        <begin position="769"/>
        <end position="792"/>
    </location>
</feature>
<feature type="repeat" description="LRR 5">
    <location>
        <begin position="869"/>
        <end position="892"/>
    </location>
</feature>
<feature type="repeat" description="LRR 6">
    <location>
        <begin position="897"/>
        <end position="921"/>
    </location>
</feature>
<feature type="repeat" description="LRR 7">
    <location>
        <begin position="930"/>
        <end position="953"/>
    </location>
</feature>
<feature type="repeat" description="LRR 8">
    <location>
        <begin position="976"/>
        <end position="1000"/>
    </location>
</feature>
<feature type="repeat" description="LRR 9">
    <location>
        <begin position="1004"/>
        <end position="1026"/>
    </location>
</feature>
<feature type="repeat" description="LRR 10">
    <location>
        <begin position="1031"/>
        <end position="1058"/>
    </location>
</feature>
<feature type="repeat" description="LRR 11">
    <location>
        <begin position="1138"/>
        <end position="1161"/>
    </location>
</feature>
<feature type="repeat" description="LRR 12">
    <location>
        <begin position="1162"/>
        <end position="1184"/>
    </location>
</feature>
<feature type="repeat" description="LRR 13">
    <location>
        <begin position="1242"/>
        <end position="1265"/>
    </location>
</feature>
<feature type="repeat" description="LRR 14">
    <location>
        <begin position="1272"/>
        <end position="1294"/>
    </location>
</feature>
<feature type="repeat" description="LRR 15">
    <location>
        <begin position="1462"/>
        <end position="1488"/>
    </location>
</feature>
<feature type="repeat" description="LRR 16">
    <location>
        <begin position="1493"/>
        <end position="1516"/>
    </location>
</feature>
<feature type="repeat" description="LRR 17">
    <location>
        <begin position="1521"/>
        <end position="1544"/>
    </location>
</feature>
<feature type="repeat" description="LRR 18">
    <location>
        <begin position="1554"/>
        <end position="1577"/>
    </location>
</feature>
<feature type="repeat" description="LRR 19">
    <location>
        <begin position="1578"/>
        <end position="1600"/>
    </location>
</feature>
<feature type="repeat" description="LRR 20">
    <location>
        <begin position="1605"/>
        <end position="1628"/>
    </location>
</feature>
<feature type="repeat" description="LRR 21">
    <location>
        <begin position="1633"/>
        <end position="1656"/>
    </location>
</feature>
<feature type="repeat" description="LRR 22">
    <location>
        <begin position="1661"/>
        <end position="1684"/>
    </location>
</feature>
<feature type="repeat" description="LRR 23">
    <location>
        <begin position="1687"/>
        <end position="1714"/>
    </location>
</feature>
<feature type="repeat" description="LRR 24">
    <location>
        <begin position="1715"/>
        <end position="1739"/>
    </location>
</feature>
<feature type="repeat" description="LRR 25">
    <location>
        <begin position="1741"/>
        <end position="1762"/>
    </location>
</feature>
<feature type="repeat" description="LRR 26">
    <location>
        <begin position="1795"/>
        <end position="1818"/>
    </location>
</feature>
<feature type="region of interest" description="Disordered" evidence="2">
    <location>
        <begin position="105"/>
        <end position="135"/>
    </location>
</feature>
<feature type="binding site" evidence="1">
    <location>
        <begin position="228"/>
        <end position="235"/>
    </location>
    <ligand>
        <name>ATP</name>
        <dbReference type="ChEBI" id="CHEBI:30616"/>
    </ligand>
</feature>
<feature type="splice variant" id="VSP_027150" description="In isoform 3." evidence="14">
    <location>
        <begin position="721"/>
        <end position="1866"/>
    </location>
</feature>
<feature type="splice variant" id="VSP_027151" description="In isoform 4 and isoform 5." evidence="12 13">
    <location>
        <begin position="1221"/>
        <end position="1249"/>
    </location>
</feature>
<feature type="splice variant" id="VSP_027152" description="In isoform 2." evidence="11">
    <original>NLGSEQSFRIHFSREDQAGKTL</original>
    <variation>KCLGSWHVWAPCFPRPFSLQPGL</variation>
    <location>
        <begin position="1307"/>
        <end position="1328"/>
    </location>
</feature>
<feature type="splice variant" id="VSP_027153" description="In isoform 2." evidence="11">
    <location>
        <begin position="1329"/>
        <end position="1866"/>
    </location>
</feature>
<feature type="splice variant" id="VSP_027154" description="In isoform 5." evidence="13">
    <original>R</original>
    <variation>S</variation>
    <location>
        <position position="1385"/>
    </location>
</feature>
<feature type="splice variant" id="VSP_027155" description="In isoform 5." evidence="13">
    <location>
        <begin position="1386"/>
        <end position="1866"/>
    </location>
</feature>
<feature type="splice variant" id="VSP_027156" description="In isoform 6." evidence="14">
    <original>LTSSCVSTEGLAHLASGLGHCHHLEELDLSNNQFDEEGTKALMRALEGKWM</original>
    <variation>IQSSQDPGRLLPDLLPFDPHQADLQLCEHRGPRPPGIWSGPLPPLGGAGLV</variation>
    <location>
        <begin position="1501"/>
        <end position="1551"/>
    </location>
</feature>
<feature type="splice variant" id="VSP_027157" description="In isoform 6." evidence="14">
    <location>
        <begin position="1552"/>
        <end position="1866"/>
    </location>
</feature>
<feature type="sequence variant" id="VAR_034607" description="In dbSNP:rs16965150.">
    <original>S</original>
    <variation>L</variation>
    <location>
        <position position="210"/>
    </location>
</feature>
<feature type="sequence variant" id="VAR_036388" description="In a breast cancer sample; somatic mutation." evidence="6">
    <original>M</original>
    <variation>I</variation>
    <location>
        <position position="361"/>
    </location>
</feature>
<feature type="sequence variant" id="VAR_034608" description="In dbSNP:rs9938543." evidence="4">
    <original>P</original>
    <variation>L</variation>
    <location>
        <position position="453"/>
    </location>
</feature>
<feature type="sequence variant" id="VAR_034609" description="In dbSNP:rs28438857." evidence="4">
    <original>C</original>
    <variation>R</variation>
    <location>
        <position position="500"/>
    </location>
</feature>
<feature type="sequence variant" id="VAR_034610" description="In dbSNP:rs35534915.">
    <original>S</original>
    <variation>N</variation>
    <location>
        <position position="833"/>
    </location>
</feature>
<feature type="sequence variant" id="VAR_060589" description="In dbSNP:rs1672867." evidence="3 9 10">
    <original>N</original>
    <variation>D</variation>
    <location>
        <position position="907"/>
    </location>
</feature>
<feature type="sequence variant" id="VAR_034611" description="In dbSNP:rs289723." evidence="5 10">
    <original>Q</original>
    <variation>K</variation>
    <location>
        <position position="1105"/>
    </location>
</feature>
<feature type="sequence variant" id="VAR_034612" description="In dbSNP:rs7190199.">
    <original>V</original>
    <variation>A</variation>
    <location>
        <position position="1455"/>
    </location>
</feature>
<feature type="sequence variant" id="VAR_034613" description="In dbSNP:rs7185320.">
    <original>Q</original>
    <variation>R</variation>
    <location>
        <position position="1466"/>
    </location>
</feature>
<feature type="sequence conflict" description="In Ref. 1; AAO59377 and 2; ABO40479." evidence="15" ref="1 2">
    <original>ADL</original>
    <variation>RTI</variation>
    <location>
        <begin position="808"/>
        <end position="810"/>
    </location>
</feature>
<feature type="sequence conflict" description="In Ref. 7; BAB55096/BAB55098." evidence="15" ref="7">
    <original>T</original>
    <variation>A</variation>
    <location>
        <position position="1411"/>
    </location>
</feature>
<feature type="sequence conflict" description="In Ref. 7; BAB55096/BAB55098." evidence="15" ref="7">
    <original>S</original>
    <variation>F</variation>
    <location>
        <position position="1715"/>
    </location>
</feature>
<feature type="sequence conflict" description="In Ref. 1; AAO59377, 2; ABO40479 and 6; AAH63566." evidence="15" ref="1 2 6">
    <original>Q</original>
    <variation>K</variation>
    <location>
        <position position="1794"/>
    </location>
</feature>
<feature type="sequence conflict" description="In Ref. 7; BAB55096/BAB55098." evidence="15" ref="7">
    <original>L</original>
    <variation>P</variation>
    <location>
        <position position="1803"/>
    </location>
</feature>
<keyword id="KW-0025">Alternative splicing</keyword>
<keyword id="KW-0067">ATP-binding</keyword>
<keyword id="KW-0963">Cytoplasm</keyword>
<keyword id="KW-0391">Immunity</keyword>
<keyword id="KW-0399">Innate immunity</keyword>
<keyword id="KW-0433">Leucine-rich repeat</keyword>
<keyword id="KW-0547">Nucleotide-binding</keyword>
<keyword id="KW-1267">Proteomics identification</keyword>
<keyword id="KW-1185">Reference proteome</keyword>
<keyword id="KW-0677">Repeat</keyword>
<accession>Q86WI3</accession>
<accession>B5MEF1</accession>
<accession>C9JMD8</accession>
<accession>Q6P4A6</accession>
<accession>Q86VM7</accession>
<accession>Q8NF42</accession>
<accession>Q8TEE2</accession>
<accession>Q8TEJ1</accession>
<accession>Q969L7</accession>
<reference key="1">
    <citation type="journal article" date="2003" name="Biochem. Biophys. Res. Commun.">
        <title>Regulation of cryopyrin/Pypaf1 signaling by pyrin, the familial Mediterranean fever gene product.</title>
        <authorList>
            <person name="Dowds T.A."/>
            <person name="Masumoto J."/>
            <person name="Chen F.F."/>
            <person name="Ogura Y."/>
            <person name="Inohara N."/>
            <person name="Nunez G."/>
        </authorList>
    </citation>
    <scope>NUCLEOTIDE SEQUENCE [MRNA] (ISOFORM 1)</scope>
    <scope>VARIANT ASP-907</scope>
</reference>
<reference key="2">
    <citation type="submission" date="2007-02" db="EMBL/GenBank/DDBJ databases">
        <authorList>
            <person name="Kronos K."/>
        </authorList>
    </citation>
    <scope>NUCLEOTIDE SEQUENCE [MRNA] (ISOFORM 1)</scope>
    <scope>VARIANT ASP-907</scope>
</reference>
<reference key="3">
    <citation type="submission" date="2002-01" db="EMBL/GenBank/DDBJ databases">
        <title>The nucleotide sequence of a long cDNA clone isolated from human spleen.</title>
        <authorList>
            <person name="Jikuya H."/>
            <person name="Takano J."/>
            <person name="Nomura N."/>
            <person name="Kikuno R."/>
            <person name="Nagase T."/>
            <person name="Ohara O."/>
        </authorList>
    </citation>
    <scope>NUCLEOTIDE SEQUENCE [LARGE SCALE MRNA] (ISOFORM 3)</scope>
    <scope>NUCLEOTIDE SEQUENCE [LARGE SCALE MRNA] OF 850-1866 (ISOFORM 6)</scope>
    <scope>VARIANTS ASP-907 AND LYS-1105</scope>
    <source>
        <tissue>Spleen</tissue>
    </source>
</reference>
<reference key="4">
    <citation type="journal article" date="2004" name="Nature">
        <title>The sequence and analysis of duplication-rich human chromosome 16.</title>
        <authorList>
            <person name="Martin J."/>
            <person name="Han C."/>
            <person name="Gordon L.A."/>
            <person name="Terry A."/>
            <person name="Prabhakar S."/>
            <person name="She X."/>
            <person name="Xie G."/>
            <person name="Hellsten U."/>
            <person name="Chan Y.M."/>
            <person name="Altherr M."/>
            <person name="Couronne O."/>
            <person name="Aerts A."/>
            <person name="Bajorek E."/>
            <person name="Black S."/>
            <person name="Blumer H."/>
            <person name="Branscomb E."/>
            <person name="Brown N.C."/>
            <person name="Bruno W.J."/>
            <person name="Buckingham J.M."/>
            <person name="Callen D.F."/>
            <person name="Campbell C.S."/>
            <person name="Campbell M.L."/>
            <person name="Campbell E.W."/>
            <person name="Caoile C."/>
            <person name="Challacombe J.F."/>
            <person name="Chasteen L.A."/>
            <person name="Chertkov O."/>
            <person name="Chi H.C."/>
            <person name="Christensen M."/>
            <person name="Clark L.M."/>
            <person name="Cohn J.D."/>
            <person name="Denys M."/>
            <person name="Detter J.C."/>
            <person name="Dickson M."/>
            <person name="Dimitrijevic-Bussod M."/>
            <person name="Escobar J."/>
            <person name="Fawcett J.J."/>
            <person name="Flowers D."/>
            <person name="Fotopulos D."/>
            <person name="Glavina T."/>
            <person name="Gomez M."/>
            <person name="Gonzales E."/>
            <person name="Goodstein D."/>
            <person name="Goodwin L.A."/>
            <person name="Grady D.L."/>
            <person name="Grigoriev I."/>
            <person name="Groza M."/>
            <person name="Hammon N."/>
            <person name="Hawkins T."/>
            <person name="Haydu L."/>
            <person name="Hildebrand C.E."/>
            <person name="Huang W."/>
            <person name="Israni S."/>
            <person name="Jett J."/>
            <person name="Jewett P.B."/>
            <person name="Kadner K."/>
            <person name="Kimball H."/>
            <person name="Kobayashi A."/>
            <person name="Krawczyk M.-C."/>
            <person name="Leyba T."/>
            <person name="Longmire J.L."/>
            <person name="Lopez F."/>
            <person name="Lou Y."/>
            <person name="Lowry S."/>
            <person name="Ludeman T."/>
            <person name="Manohar C.F."/>
            <person name="Mark G.A."/>
            <person name="McMurray K.L."/>
            <person name="Meincke L.J."/>
            <person name="Morgan J."/>
            <person name="Moyzis R.K."/>
            <person name="Mundt M.O."/>
            <person name="Munk A.C."/>
            <person name="Nandkeshwar R.D."/>
            <person name="Pitluck S."/>
            <person name="Pollard M."/>
            <person name="Predki P."/>
            <person name="Parson-Quintana B."/>
            <person name="Ramirez L."/>
            <person name="Rash S."/>
            <person name="Retterer J."/>
            <person name="Ricke D.O."/>
            <person name="Robinson D.L."/>
            <person name="Rodriguez A."/>
            <person name="Salamov A."/>
            <person name="Saunders E.H."/>
            <person name="Scott D."/>
            <person name="Shough T."/>
            <person name="Stallings R.L."/>
            <person name="Stalvey M."/>
            <person name="Sutherland R.D."/>
            <person name="Tapia R."/>
            <person name="Tesmer J.G."/>
            <person name="Thayer N."/>
            <person name="Thompson L.S."/>
            <person name="Tice H."/>
            <person name="Torney D.C."/>
            <person name="Tran-Gyamfi M."/>
            <person name="Tsai M."/>
            <person name="Ulanovsky L.E."/>
            <person name="Ustaszewska A."/>
            <person name="Vo N."/>
            <person name="White P.S."/>
            <person name="Williams A.L."/>
            <person name="Wills P.L."/>
            <person name="Wu J.-R."/>
            <person name="Wu K."/>
            <person name="Yang J."/>
            <person name="DeJong P."/>
            <person name="Bruce D."/>
            <person name="Doggett N.A."/>
            <person name="Deaven L."/>
            <person name="Schmutz J."/>
            <person name="Grimwood J."/>
            <person name="Richardson P."/>
            <person name="Rokhsar D.S."/>
            <person name="Eichler E.E."/>
            <person name="Gilna P."/>
            <person name="Lucas S.M."/>
            <person name="Myers R.M."/>
            <person name="Rubin E.M."/>
            <person name="Pennacchio L.A."/>
        </authorList>
    </citation>
    <scope>NUCLEOTIDE SEQUENCE [LARGE SCALE GENOMIC DNA]</scope>
</reference>
<reference key="5">
    <citation type="journal article" date="2003" name="DNA Res.">
        <title>Characterization of long cDNA clones from human adult spleen. II. The complete sequences of 81 cDNA clones.</title>
        <authorList>
            <person name="Jikuya H."/>
            <person name="Takano J."/>
            <person name="Kikuno R."/>
            <person name="Hirosawa M."/>
            <person name="Nagase T."/>
            <person name="Nomura N."/>
            <person name="Ohara O."/>
        </authorList>
    </citation>
    <scope>NUCLEOTIDE SEQUENCE [LARGE SCALE MRNA] OF 274-1866 (ISOFORM 2)</scope>
    <scope>VARIANTS LEU-453 AND ARG-500</scope>
    <source>
        <tissue>Spleen</tissue>
    </source>
</reference>
<reference key="6">
    <citation type="journal article" date="2004" name="Genome Res.">
        <title>The status, quality, and expansion of the NIH full-length cDNA project: the Mammalian Gene Collection (MGC).</title>
        <authorList>
            <consortium name="The MGC Project Team"/>
        </authorList>
    </citation>
    <scope>NUCLEOTIDE SEQUENCE [LARGE SCALE MRNA] OF 971-1385 (ISOFORM 5)</scope>
    <scope>NUCLEOTIDE SEQUENCE [LARGE SCALE MRNA] OF 1030-1866</scope>
    <scope>VARIANT LYS-1105</scope>
    <source>
        <tissue>Brain</tissue>
        <tissue>Ovary</tissue>
    </source>
</reference>
<reference key="7">
    <citation type="journal article" date="2004" name="Nat. Genet.">
        <title>Complete sequencing and characterization of 21,243 full-length human cDNAs.</title>
        <authorList>
            <person name="Ota T."/>
            <person name="Suzuki Y."/>
            <person name="Nishikawa T."/>
            <person name="Otsuki T."/>
            <person name="Sugiyama T."/>
            <person name="Irie R."/>
            <person name="Wakamatsu A."/>
            <person name="Hayashi K."/>
            <person name="Sato H."/>
            <person name="Nagai K."/>
            <person name="Kimura K."/>
            <person name="Makita H."/>
            <person name="Sekine M."/>
            <person name="Obayashi M."/>
            <person name="Nishi T."/>
            <person name="Shibahara T."/>
            <person name="Tanaka T."/>
            <person name="Ishii S."/>
            <person name="Yamamoto J."/>
            <person name="Saito K."/>
            <person name="Kawai Y."/>
            <person name="Isono Y."/>
            <person name="Nakamura Y."/>
            <person name="Nagahari K."/>
            <person name="Murakami K."/>
            <person name="Yasuda T."/>
            <person name="Iwayanagi T."/>
            <person name="Wagatsuma M."/>
            <person name="Shiratori A."/>
            <person name="Sudo H."/>
            <person name="Hosoiri T."/>
            <person name="Kaku Y."/>
            <person name="Kodaira H."/>
            <person name="Kondo H."/>
            <person name="Sugawara M."/>
            <person name="Takahashi M."/>
            <person name="Kanda K."/>
            <person name="Yokoi T."/>
            <person name="Furuya T."/>
            <person name="Kikkawa E."/>
            <person name="Omura Y."/>
            <person name="Abe K."/>
            <person name="Kamihara K."/>
            <person name="Katsuta N."/>
            <person name="Sato K."/>
            <person name="Tanikawa M."/>
            <person name="Yamazaki M."/>
            <person name="Ninomiya K."/>
            <person name="Ishibashi T."/>
            <person name="Yamashita H."/>
            <person name="Murakawa K."/>
            <person name="Fujimori K."/>
            <person name="Tanai H."/>
            <person name="Kimata M."/>
            <person name="Watanabe M."/>
            <person name="Hiraoka S."/>
            <person name="Chiba Y."/>
            <person name="Ishida S."/>
            <person name="Ono Y."/>
            <person name="Takiguchi S."/>
            <person name="Watanabe S."/>
            <person name="Yosida M."/>
            <person name="Hotuta T."/>
            <person name="Kusano J."/>
            <person name="Kanehori K."/>
            <person name="Takahashi-Fujii A."/>
            <person name="Hara H."/>
            <person name="Tanase T.-O."/>
            <person name="Nomura Y."/>
            <person name="Togiya S."/>
            <person name="Komai F."/>
            <person name="Hara R."/>
            <person name="Takeuchi K."/>
            <person name="Arita M."/>
            <person name="Imose N."/>
            <person name="Musashino K."/>
            <person name="Yuuki H."/>
            <person name="Oshima A."/>
            <person name="Sasaki N."/>
            <person name="Aotsuka S."/>
            <person name="Yoshikawa Y."/>
            <person name="Matsunawa H."/>
            <person name="Ichihara T."/>
            <person name="Shiohata N."/>
            <person name="Sano S."/>
            <person name="Moriya S."/>
            <person name="Momiyama H."/>
            <person name="Satoh N."/>
            <person name="Takami S."/>
            <person name="Terashima Y."/>
            <person name="Suzuki O."/>
            <person name="Nakagawa S."/>
            <person name="Senoh A."/>
            <person name="Mizoguchi H."/>
            <person name="Goto Y."/>
            <person name="Shimizu F."/>
            <person name="Wakebe H."/>
            <person name="Hishigaki H."/>
            <person name="Watanabe T."/>
            <person name="Sugiyama A."/>
            <person name="Takemoto M."/>
            <person name="Kawakami B."/>
            <person name="Yamazaki M."/>
            <person name="Watanabe K."/>
            <person name="Kumagai A."/>
            <person name="Itakura S."/>
            <person name="Fukuzumi Y."/>
            <person name="Fujimori Y."/>
            <person name="Komiyama M."/>
            <person name="Tashiro H."/>
            <person name="Tanigami A."/>
            <person name="Fujiwara T."/>
            <person name="Ono T."/>
            <person name="Yamada K."/>
            <person name="Fujii Y."/>
            <person name="Ozaki K."/>
            <person name="Hirao M."/>
            <person name="Ohmori Y."/>
            <person name="Kawabata A."/>
            <person name="Hikiji T."/>
            <person name="Kobatake N."/>
            <person name="Inagaki H."/>
            <person name="Ikema Y."/>
            <person name="Okamoto S."/>
            <person name="Okitani R."/>
            <person name="Kawakami T."/>
            <person name="Noguchi S."/>
            <person name="Itoh T."/>
            <person name="Shigeta K."/>
            <person name="Senba T."/>
            <person name="Matsumura K."/>
            <person name="Nakajima Y."/>
            <person name="Mizuno T."/>
            <person name="Morinaga M."/>
            <person name="Sasaki M."/>
            <person name="Togashi T."/>
            <person name="Oyama M."/>
            <person name="Hata H."/>
            <person name="Watanabe M."/>
            <person name="Komatsu T."/>
            <person name="Mizushima-Sugano J."/>
            <person name="Satoh T."/>
            <person name="Shirai Y."/>
            <person name="Takahashi Y."/>
            <person name="Nakagawa K."/>
            <person name="Okumura K."/>
            <person name="Nagase T."/>
            <person name="Nomura N."/>
            <person name="Kikuchi H."/>
            <person name="Masuho Y."/>
            <person name="Yamashita R."/>
            <person name="Nakai K."/>
            <person name="Yada T."/>
            <person name="Nakamura Y."/>
            <person name="Ohara O."/>
            <person name="Isogai T."/>
            <person name="Sugano S."/>
        </authorList>
    </citation>
    <scope>NUCLEOTIDE SEQUENCE [LARGE SCALE MRNA] OF 1067-1866 (ISOFORM 4)</scope>
</reference>
<reference key="8">
    <citation type="journal article" date="2010" name="Cell">
        <title>NLRC5 negatively regulates the NF-kappaB and type I interferon signaling pathways.</title>
        <authorList>
            <person name="Cui J."/>
            <person name="Zhu L."/>
            <person name="Xia X."/>
            <person name="Wang H.Y."/>
            <person name="Legras X."/>
            <person name="Hong J."/>
            <person name="Ji J."/>
            <person name="Shen P."/>
            <person name="Zheng S."/>
            <person name="Chen Z.J."/>
            <person name="Wang R.F."/>
        </authorList>
    </citation>
    <scope>FUNCTION</scope>
    <scope>TISSUE SPECIFICITY</scope>
    <scope>SUBCELLULAR LOCATION</scope>
    <scope>INTERACTION WITH CHUK; RIGI; IFIH1 AND IKBKB</scope>
</reference>
<reference key="9">
    <citation type="journal article" date="2010" name="J. Immunol.">
        <title>The nucleotide-binding oligomerization domain-like receptor NLRC5 is involved in IFN-dependent antiviral immune responses.</title>
        <authorList>
            <person name="Kuenzel S."/>
            <person name="Till A."/>
            <person name="Winkler M."/>
            <person name="Hasler R."/>
            <person name="Lipinski S."/>
            <person name="Jung S."/>
            <person name="Grotzinger J."/>
            <person name="Fickenscher H."/>
            <person name="Schreiber S."/>
            <person name="Rosenstiel P."/>
        </authorList>
    </citation>
    <scope>FUNCTION</scope>
    <scope>INDUCTION</scope>
    <scope>TISSUE SPECIFICITY</scope>
    <scope>SUBCELLULAR LOCATION</scope>
</reference>
<reference key="10">
    <citation type="journal article" date="2005" name="Annu. Rev. Immunol.">
        <title>CATERPILLER: a novel gene family important in immunity, cell death, and diseases.</title>
        <authorList>
            <person name="Ting J.P.-Y."/>
            <person name="Davis B.K."/>
        </authorList>
    </citation>
    <scope>REVIEW</scope>
</reference>
<reference key="11">
    <citation type="journal article" date="2006" name="Science">
        <title>The consensus coding sequences of human breast and colorectal cancers.</title>
        <authorList>
            <person name="Sjoeblom T."/>
            <person name="Jones S."/>
            <person name="Wood L.D."/>
            <person name="Parsons D.W."/>
            <person name="Lin J."/>
            <person name="Barber T.D."/>
            <person name="Mandelker D."/>
            <person name="Leary R.J."/>
            <person name="Ptak J."/>
            <person name="Silliman N."/>
            <person name="Szabo S."/>
            <person name="Buckhaults P."/>
            <person name="Farrell C."/>
            <person name="Meeh P."/>
            <person name="Markowitz S.D."/>
            <person name="Willis J."/>
            <person name="Dawson D."/>
            <person name="Willson J.K.V."/>
            <person name="Gazdar A.F."/>
            <person name="Hartigan J."/>
            <person name="Wu L."/>
            <person name="Liu C."/>
            <person name="Parmigiani G."/>
            <person name="Park B.H."/>
            <person name="Bachman K.E."/>
            <person name="Papadopoulos N."/>
            <person name="Vogelstein B."/>
            <person name="Kinzler K.W."/>
            <person name="Velculescu V.E."/>
        </authorList>
    </citation>
    <scope>VARIANT [LARGE SCALE ANALYSIS] ILE-361</scope>
</reference>
<name>NLRC5_HUMAN</name>
<evidence type="ECO:0000255" key="1">
    <source>
        <dbReference type="PROSITE-ProRule" id="PRU00136"/>
    </source>
</evidence>
<evidence type="ECO:0000256" key="2">
    <source>
        <dbReference type="SAM" id="MobiDB-lite"/>
    </source>
</evidence>
<evidence type="ECO:0000269" key="3">
    <source>
    </source>
</evidence>
<evidence type="ECO:0000269" key="4">
    <source>
    </source>
</evidence>
<evidence type="ECO:0000269" key="5">
    <source>
    </source>
</evidence>
<evidence type="ECO:0000269" key="6">
    <source>
    </source>
</evidence>
<evidence type="ECO:0000269" key="7">
    <source>
    </source>
</evidence>
<evidence type="ECO:0000269" key="8">
    <source>
    </source>
</evidence>
<evidence type="ECO:0000269" key="9">
    <source ref="2"/>
</evidence>
<evidence type="ECO:0000269" key="10">
    <source ref="3"/>
</evidence>
<evidence type="ECO:0000303" key="11">
    <source>
    </source>
</evidence>
<evidence type="ECO:0000303" key="12">
    <source>
    </source>
</evidence>
<evidence type="ECO:0000303" key="13">
    <source>
    </source>
</evidence>
<evidence type="ECO:0000303" key="14">
    <source ref="3"/>
</evidence>
<evidence type="ECO:0000305" key="15"/>
<evidence type="ECO:0000305" key="16">
    <source>
    </source>
</evidence>
<comment type="function">
    <text evidence="7 8">Probable regulator of the NF-kappa-B and type I interferon signaling pathways. May also regulate the type II interferon signaling pathway. Plays a role in homeostatic control of innate immunity and in antiviral defense mechanisms.</text>
</comment>
<comment type="subunit">
    <text evidence="8">Interacts with CHUK and IKBKB; prevents CHUK and IKBKB phosphorylation and inhibits their kinase activity. Interacts with RIGI and IFIH1; blocks the interaction of MAVS to RIGI.</text>
</comment>
<comment type="subcellular location">
    <subcellularLocation>
        <location evidence="7 8">Cytoplasm</location>
    </subcellularLocation>
</comment>
<comment type="alternative products">
    <event type="alternative splicing"/>
    <isoform>
        <id>Q86WI3-1</id>
        <name>1</name>
        <sequence type="displayed"/>
    </isoform>
    <isoform>
        <id>Q86WI3-2</id>
        <name>2</name>
        <sequence type="described" ref="VSP_027152 VSP_027153"/>
    </isoform>
    <isoform>
        <id>Q86WI3-3</id>
        <name>3</name>
        <sequence type="described" ref="VSP_027150"/>
    </isoform>
    <isoform>
        <id>Q86WI3-4</id>
        <name>4</name>
        <sequence type="described" ref="VSP_027151"/>
    </isoform>
    <isoform>
        <id>Q86WI3-5</id>
        <name>5</name>
        <sequence type="described" ref="VSP_027151 VSP_027154 VSP_027155"/>
    </isoform>
    <isoform>
        <id>Q86WI3-6</id>
        <name>6</name>
        <sequence type="described" ref="VSP_027156 VSP_027157"/>
    </isoform>
</comment>
<comment type="tissue specificity">
    <text evidence="7 8">Expressed in spleen, thymus, lung, brain, tonsil, heart and prostate.</text>
</comment>
<comment type="induction">
    <text evidence="7">By IFNG/IFN-gamma.</text>
</comment>
<comment type="miscellaneous">
    <molecule>Isoform 2</molecule>
    <text evidence="15">May be produced at very low levels due to a premature stop codon in the mRNA, leading to nonsense-mediated mRNA decay.</text>
</comment>
<comment type="miscellaneous">
    <molecule>Isoform 3</molecule>
    <text evidence="15">May be produced at very low levels due to a premature stop codon in the mRNA, leading to nonsense-mediated mRNA decay.</text>
</comment>
<comment type="miscellaneous">
    <molecule>Isoform 5</molecule>
    <text evidence="15">May be produced at very low levels due to a premature stop codon in the mRNA, leading to nonsense-mediated mRNA decay.</text>
</comment>
<comment type="miscellaneous">
    <molecule>Isoform 6</molecule>
    <text evidence="15">May be produced at very low levels due to a premature stop codon in the mRNA, leading to nonsense-mediated mRNA decay.</text>
</comment>
<comment type="similarity">
    <text evidence="15">Belongs to the NLRP family.</text>
</comment>
<comment type="caution">
    <text evidence="16">Supposed to contain a CARD domain at the N-terminus (PubMed:20434986). However, this domain is not detected by Pfam, PROSITE or SMART. Has a weak similarity with a DAPIN domain.</text>
</comment>
<comment type="sequence caution" evidence="15">
    <conflict type="erroneous initiation">
        <sequence resource="EMBL-CDS" id="BAB55096"/>
    </conflict>
    <text>Truncated N-terminus.</text>
</comment>
<comment type="sequence caution" evidence="15">
    <conflict type="erroneous initiation">
        <sequence resource="EMBL-CDS" id="BAB55098"/>
    </conflict>
    <text>Truncated N-terminus.</text>
</comment>
<comment type="sequence caution" evidence="15">
    <conflict type="erroneous initiation">
        <sequence resource="EMBL-CDS" id="BAB85008"/>
    </conflict>
    <text>Extended N-terminus.</text>
</comment>